<dbReference type="EMBL" id="M16507">
    <property type="protein sequence ID" value="AAA35032.1"/>
    <property type="molecule type" value="Genomic_DNA"/>
</dbReference>
<dbReference type="EMBL" id="D50617">
    <property type="protein sequence ID" value="BAA09233.1"/>
    <property type="molecule type" value="Genomic_DNA"/>
</dbReference>
<dbReference type="EMBL" id="AY692843">
    <property type="protein sequence ID" value="AAT92862.1"/>
    <property type="molecule type" value="Genomic_DNA"/>
</dbReference>
<dbReference type="EMBL" id="BK006940">
    <property type="protein sequence ID" value="DAA12434.1"/>
    <property type="molecule type" value="Genomic_DNA"/>
</dbReference>
<dbReference type="PIR" id="A25959">
    <property type="entry name" value="TVBYQ4"/>
</dbReference>
<dbReference type="RefSeq" id="NP_116650.1">
    <property type="nucleotide sequence ID" value="NM_001179961.1"/>
</dbReference>
<dbReference type="PDB" id="1G16">
    <property type="method" value="X-ray"/>
    <property type="resolution" value="1.80 A"/>
    <property type="chains" value="A/B/C/D=18-187"/>
</dbReference>
<dbReference type="PDB" id="1G17">
    <property type="method" value="X-ray"/>
    <property type="resolution" value="2.00 A"/>
    <property type="chains" value="A/B=18-187"/>
</dbReference>
<dbReference type="PDB" id="2EQB">
    <property type="method" value="X-ray"/>
    <property type="resolution" value="2.70 A"/>
    <property type="chains" value="A=19-187"/>
</dbReference>
<dbReference type="PDB" id="2OCY">
    <property type="method" value="X-ray"/>
    <property type="resolution" value="3.30 A"/>
    <property type="chains" value="C=18-187"/>
</dbReference>
<dbReference type="PDB" id="3CPH">
    <property type="method" value="X-ray"/>
    <property type="resolution" value="2.90 A"/>
    <property type="chains" value="A=1-213"/>
</dbReference>
<dbReference type="PDB" id="4Z8Y">
    <property type="method" value="X-ray"/>
    <property type="resolution" value="1.90 A"/>
    <property type="chains" value="A/B=19-187"/>
</dbReference>
<dbReference type="PDB" id="4ZDW">
    <property type="method" value="X-ray"/>
    <property type="resolution" value="2.90 A"/>
    <property type="chains" value="A=19-187"/>
</dbReference>
<dbReference type="PDBsum" id="1G16"/>
<dbReference type="PDBsum" id="1G17"/>
<dbReference type="PDBsum" id="2EQB"/>
<dbReference type="PDBsum" id="2OCY"/>
<dbReference type="PDBsum" id="3CPH"/>
<dbReference type="PDBsum" id="4Z8Y"/>
<dbReference type="PDBsum" id="4ZDW"/>
<dbReference type="SMR" id="P07560"/>
<dbReference type="BioGRID" id="31141">
    <property type="interactions" value="296"/>
</dbReference>
<dbReference type="DIP" id="DIP-2492N"/>
<dbReference type="FunCoup" id="P07560">
    <property type="interactions" value="744"/>
</dbReference>
<dbReference type="IntAct" id="P07560">
    <property type="interactions" value="18"/>
</dbReference>
<dbReference type="MINT" id="P07560"/>
<dbReference type="STRING" id="4932.YFL005W"/>
<dbReference type="iPTMnet" id="P07560"/>
<dbReference type="PaxDb" id="4932-YFL005W"/>
<dbReference type="PeptideAtlas" id="P07560"/>
<dbReference type="TopDownProteomics" id="P07560"/>
<dbReference type="EnsemblFungi" id="YFL005W_mRNA">
    <property type="protein sequence ID" value="YFL005W"/>
    <property type="gene ID" value="YFL005W"/>
</dbReference>
<dbReference type="GeneID" id="850543"/>
<dbReference type="KEGG" id="sce:YFL005W"/>
<dbReference type="AGR" id="SGD:S000001889"/>
<dbReference type="SGD" id="S000001889">
    <property type="gene designation" value="SEC4"/>
</dbReference>
<dbReference type="VEuPathDB" id="FungiDB:YFL005W"/>
<dbReference type="eggNOG" id="KOG0078">
    <property type="taxonomic scope" value="Eukaryota"/>
</dbReference>
<dbReference type="GeneTree" id="ENSGT00940000169395"/>
<dbReference type="HOGENOM" id="CLU_041217_10_1_1"/>
<dbReference type="InParanoid" id="P07560"/>
<dbReference type="OMA" id="ENIRTWF"/>
<dbReference type="OrthoDB" id="9989112at2759"/>
<dbReference type="BioCyc" id="YEAST:G3O-30450-MONOMER"/>
<dbReference type="Reactome" id="R-SCE-6798695">
    <property type="pathway name" value="Neutrophil degranulation"/>
</dbReference>
<dbReference type="Reactome" id="R-SCE-8873719">
    <property type="pathway name" value="RAB geranylgeranylation"/>
</dbReference>
<dbReference type="Reactome" id="R-SCE-8876198">
    <property type="pathway name" value="RAB GEFs exchange GTP for GDP on RABs"/>
</dbReference>
<dbReference type="BioGRID-ORCS" id="850543">
    <property type="hits" value="2 hits in 10 CRISPR screens"/>
</dbReference>
<dbReference type="CD-CODE" id="E03F929F">
    <property type="entry name" value="Stress granule"/>
</dbReference>
<dbReference type="EvolutionaryTrace" id="P07560"/>
<dbReference type="PRO" id="PR:P07560"/>
<dbReference type="Proteomes" id="UP000002311">
    <property type="component" value="Chromosome VI"/>
</dbReference>
<dbReference type="RNAct" id="P07560">
    <property type="molecule type" value="protein"/>
</dbReference>
<dbReference type="GO" id="GO:0005935">
    <property type="term" value="C:cellular bud neck"/>
    <property type="evidence" value="ECO:0007005"/>
    <property type="project" value="SGD"/>
</dbReference>
<dbReference type="GO" id="GO:0005783">
    <property type="term" value="C:endoplasmic reticulum"/>
    <property type="evidence" value="ECO:0007005"/>
    <property type="project" value="SGD"/>
</dbReference>
<dbReference type="GO" id="GO:0005768">
    <property type="term" value="C:endosome"/>
    <property type="evidence" value="ECO:0000318"/>
    <property type="project" value="GO_Central"/>
</dbReference>
<dbReference type="GO" id="GO:0000131">
    <property type="term" value="C:incipient cellular bud site"/>
    <property type="evidence" value="ECO:0000314"/>
    <property type="project" value="SGD"/>
</dbReference>
<dbReference type="GO" id="GO:0043332">
    <property type="term" value="C:mating projection tip"/>
    <property type="evidence" value="ECO:0000314"/>
    <property type="project" value="SGD"/>
</dbReference>
<dbReference type="GO" id="GO:0005741">
    <property type="term" value="C:mitochondrial outer membrane"/>
    <property type="evidence" value="ECO:0007005"/>
    <property type="project" value="SGD"/>
</dbReference>
<dbReference type="GO" id="GO:0005739">
    <property type="term" value="C:mitochondrion"/>
    <property type="evidence" value="ECO:0007005"/>
    <property type="project" value="SGD"/>
</dbReference>
<dbReference type="GO" id="GO:0005886">
    <property type="term" value="C:plasma membrane"/>
    <property type="evidence" value="ECO:0007005"/>
    <property type="project" value="SGD"/>
</dbReference>
<dbReference type="GO" id="GO:0030133">
    <property type="term" value="C:transport vesicle"/>
    <property type="evidence" value="ECO:0000314"/>
    <property type="project" value="SGD"/>
</dbReference>
<dbReference type="GO" id="GO:0030658">
    <property type="term" value="C:transport vesicle membrane"/>
    <property type="evidence" value="ECO:0007669"/>
    <property type="project" value="UniProtKB-SubCell"/>
</dbReference>
<dbReference type="GO" id="GO:0031982">
    <property type="term" value="C:vesicle"/>
    <property type="evidence" value="ECO:0000314"/>
    <property type="project" value="SGD"/>
</dbReference>
<dbReference type="GO" id="GO:0005525">
    <property type="term" value="F:GTP binding"/>
    <property type="evidence" value="ECO:0000314"/>
    <property type="project" value="SGD"/>
</dbReference>
<dbReference type="GO" id="GO:0003924">
    <property type="term" value="F:GTPase activity"/>
    <property type="evidence" value="ECO:0000314"/>
    <property type="project" value="SGD"/>
</dbReference>
<dbReference type="GO" id="GO:0031321">
    <property type="term" value="P:ascospore-type prospore assembly"/>
    <property type="evidence" value="ECO:0000315"/>
    <property type="project" value="SGD"/>
</dbReference>
<dbReference type="GO" id="GO:0006914">
    <property type="term" value="P:autophagy"/>
    <property type="evidence" value="ECO:0000315"/>
    <property type="project" value="SGD"/>
</dbReference>
<dbReference type="GO" id="GO:0006887">
    <property type="term" value="P:exocytosis"/>
    <property type="evidence" value="ECO:0000314"/>
    <property type="project" value="SGD"/>
</dbReference>
<dbReference type="GO" id="GO:0006893">
    <property type="term" value="P:Golgi to plasma membrane transport"/>
    <property type="evidence" value="ECO:0000315"/>
    <property type="project" value="SGD"/>
</dbReference>
<dbReference type="GO" id="GO:0007107">
    <property type="term" value="P:membrane addition at site of cytokinesis"/>
    <property type="evidence" value="ECO:0000315"/>
    <property type="project" value="SGD"/>
</dbReference>
<dbReference type="GO" id="GO:0015031">
    <property type="term" value="P:protein transport"/>
    <property type="evidence" value="ECO:0007669"/>
    <property type="project" value="UniProtKB-KW"/>
</dbReference>
<dbReference type="GO" id="GO:0006906">
    <property type="term" value="P:vesicle fusion"/>
    <property type="evidence" value="ECO:0000315"/>
    <property type="project" value="SGD"/>
</dbReference>
<dbReference type="CDD" id="cd01867">
    <property type="entry name" value="Rab8_Rab10_Rab13_like"/>
    <property type="match status" value="1"/>
</dbReference>
<dbReference type="FunFam" id="3.40.50.300:FF:000961">
    <property type="entry name" value="Ras-related protein Rab-8B"/>
    <property type="match status" value="1"/>
</dbReference>
<dbReference type="Gene3D" id="3.40.50.300">
    <property type="entry name" value="P-loop containing nucleotide triphosphate hydrolases"/>
    <property type="match status" value="1"/>
</dbReference>
<dbReference type="InterPro" id="IPR027417">
    <property type="entry name" value="P-loop_NTPase"/>
</dbReference>
<dbReference type="InterPro" id="IPR005225">
    <property type="entry name" value="Small_GTP-bd"/>
</dbReference>
<dbReference type="InterPro" id="IPR001806">
    <property type="entry name" value="Small_GTPase"/>
</dbReference>
<dbReference type="InterPro" id="IPR050305">
    <property type="entry name" value="Small_GTPase_Rab"/>
</dbReference>
<dbReference type="NCBIfam" id="TIGR00231">
    <property type="entry name" value="small_GTP"/>
    <property type="match status" value="1"/>
</dbReference>
<dbReference type="PANTHER" id="PTHR47980">
    <property type="entry name" value="LD44762P"/>
    <property type="match status" value="1"/>
</dbReference>
<dbReference type="Pfam" id="PF00071">
    <property type="entry name" value="Ras"/>
    <property type="match status" value="1"/>
</dbReference>
<dbReference type="PRINTS" id="PR00449">
    <property type="entry name" value="RASTRNSFRMNG"/>
</dbReference>
<dbReference type="SMART" id="SM00177">
    <property type="entry name" value="ARF"/>
    <property type="match status" value="1"/>
</dbReference>
<dbReference type="SMART" id="SM00175">
    <property type="entry name" value="RAB"/>
    <property type="match status" value="1"/>
</dbReference>
<dbReference type="SMART" id="SM00176">
    <property type="entry name" value="RAN"/>
    <property type="match status" value="1"/>
</dbReference>
<dbReference type="SMART" id="SM00173">
    <property type="entry name" value="RAS"/>
    <property type="match status" value="1"/>
</dbReference>
<dbReference type="SMART" id="SM00174">
    <property type="entry name" value="RHO"/>
    <property type="match status" value="1"/>
</dbReference>
<dbReference type="SUPFAM" id="SSF52540">
    <property type="entry name" value="P-loop containing nucleoside triphosphate hydrolases"/>
    <property type="match status" value="1"/>
</dbReference>
<dbReference type="PROSITE" id="PS51419">
    <property type="entry name" value="RAB"/>
    <property type="match status" value="1"/>
</dbReference>
<keyword id="KW-0002">3D-structure</keyword>
<keyword id="KW-1003">Cell membrane</keyword>
<keyword id="KW-0963">Cytoplasm</keyword>
<keyword id="KW-0968">Cytoplasmic vesicle</keyword>
<keyword id="KW-0268">Exocytosis</keyword>
<keyword id="KW-0342">GTP-binding</keyword>
<keyword id="KW-0449">Lipoprotein</keyword>
<keyword id="KW-0472">Membrane</keyword>
<keyword id="KW-0547">Nucleotide-binding</keyword>
<keyword id="KW-0597">Phosphoprotein</keyword>
<keyword id="KW-0636">Prenylation</keyword>
<keyword id="KW-0653">Protein transport</keyword>
<keyword id="KW-1185">Reference proteome</keyword>
<keyword id="KW-0813">Transport</keyword>
<name>SEC4_YEAST</name>
<sequence length="215" mass="23506">MSGLRTVSASSGNGKSYDSIMKILLIGDSGVGKSCLLVRFVEDKFNPSFITTIGIDFKIKTVDINGKKVKLQLWDTAGQERFRTITTAYYRGAMGIILVYDVTDERTFTNIKQWFKTVNEHANDEAQLLLVGNKSDMETRVVTADQGEALAKELGIPFIESSAKNDDNVNEIFFTLAKLIQEKIDSNKLVGVGNGKEGNISINSGSGNSSKSNCC</sequence>
<accession>P07560</accession>
<accession>D6VTM4</accession>
<protein>
    <recommendedName>
        <fullName>Ras-related protein SEC4</fullName>
    </recommendedName>
    <alternativeName>
        <fullName>Suppressor of RHO3 protein 6</fullName>
    </alternativeName>
</protein>
<feature type="chain" id="PRO_0000121330" description="Ras-related protein SEC4">
    <location>
        <begin position="1"/>
        <end position="215"/>
    </location>
</feature>
<feature type="short sequence motif" description="Effector region" evidence="7">
    <location>
        <begin position="49"/>
        <end position="57"/>
    </location>
</feature>
<feature type="binding site">
    <location>
        <begin position="27"/>
        <end position="34"/>
    </location>
    <ligand>
        <name>GTP</name>
        <dbReference type="ChEBI" id="CHEBI:37565"/>
    </ligand>
</feature>
<feature type="binding site">
    <location>
        <begin position="75"/>
        <end position="79"/>
    </location>
    <ligand>
        <name>GTP</name>
        <dbReference type="ChEBI" id="CHEBI:37565"/>
    </ligand>
</feature>
<feature type="binding site" evidence="1">
    <location>
        <begin position="133"/>
        <end position="136"/>
    </location>
    <ligand>
        <name>GTP</name>
        <dbReference type="ChEBI" id="CHEBI:37565"/>
    </ligand>
</feature>
<feature type="modified residue" description="Phosphoserine" evidence="8 9 10">
    <location>
        <position position="201"/>
    </location>
</feature>
<feature type="modified residue" description="Phosphoserine" evidence="8 10">
    <location>
        <position position="204"/>
    </location>
</feature>
<feature type="lipid moiety-binding region" description="S-geranylgeranyl cysteine" evidence="1">
    <location>
        <position position="214"/>
    </location>
</feature>
<feature type="lipid moiety-binding region" description="S-geranylgeranyl cysteine" evidence="1">
    <location>
        <position position="215"/>
    </location>
</feature>
<feature type="strand" evidence="11">
    <location>
        <begin position="20"/>
        <end position="28"/>
    </location>
</feature>
<feature type="strand" evidence="12">
    <location>
        <begin position="29"/>
        <end position="31"/>
    </location>
</feature>
<feature type="helix" evidence="11">
    <location>
        <begin position="33"/>
        <end position="42"/>
    </location>
</feature>
<feature type="strand" evidence="12">
    <location>
        <begin position="44"/>
        <end position="46"/>
    </location>
</feature>
<feature type="helix" evidence="14">
    <location>
        <begin position="49"/>
        <end position="52"/>
    </location>
</feature>
<feature type="strand" evidence="11">
    <location>
        <begin position="57"/>
        <end position="66"/>
    </location>
</feature>
<feature type="strand" evidence="11">
    <location>
        <begin position="68"/>
        <end position="74"/>
    </location>
</feature>
<feature type="helix" evidence="11">
    <location>
        <begin position="79"/>
        <end position="81"/>
    </location>
</feature>
<feature type="helix" evidence="14">
    <location>
        <begin position="83"/>
        <end position="85"/>
    </location>
</feature>
<feature type="helix" evidence="11">
    <location>
        <begin position="87"/>
        <end position="90"/>
    </location>
</feature>
<feature type="strand" evidence="11">
    <location>
        <begin position="93"/>
        <end position="101"/>
    </location>
</feature>
<feature type="helix" evidence="11">
    <location>
        <begin position="105"/>
        <end position="109"/>
    </location>
</feature>
<feature type="helix" evidence="11">
    <location>
        <begin position="111"/>
        <end position="121"/>
    </location>
</feature>
<feature type="turn" evidence="13">
    <location>
        <begin position="122"/>
        <end position="124"/>
    </location>
</feature>
<feature type="strand" evidence="11">
    <location>
        <begin position="127"/>
        <end position="133"/>
    </location>
</feature>
<feature type="strand" evidence="12">
    <location>
        <begin position="136"/>
        <end position="138"/>
    </location>
</feature>
<feature type="helix" evidence="11">
    <location>
        <begin position="144"/>
        <end position="154"/>
    </location>
</feature>
<feature type="strand" evidence="11">
    <location>
        <begin position="158"/>
        <end position="160"/>
    </location>
</feature>
<feature type="turn" evidence="11">
    <location>
        <begin position="163"/>
        <end position="166"/>
    </location>
</feature>
<feature type="helix" evidence="11">
    <location>
        <begin position="169"/>
        <end position="182"/>
    </location>
</feature>
<feature type="turn" evidence="12">
    <location>
        <begin position="183"/>
        <end position="185"/>
    </location>
</feature>
<gene>
    <name type="primary">SEC4</name>
    <name type="synonym">SRO6</name>
    <name type="ordered locus">YFL005W</name>
</gene>
<evidence type="ECO:0000250" key="1"/>
<evidence type="ECO:0000269" key="2">
    <source>
    </source>
</evidence>
<evidence type="ECO:0000269" key="3">
    <source>
    </source>
</evidence>
<evidence type="ECO:0000269" key="4">
    <source>
    </source>
</evidence>
<evidence type="ECO:0000269" key="5">
    <source>
    </source>
</evidence>
<evidence type="ECO:0000269" key="6">
    <source>
    </source>
</evidence>
<evidence type="ECO:0000305" key="7"/>
<evidence type="ECO:0007744" key="8">
    <source>
    </source>
</evidence>
<evidence type="ECO:0007744" key="9">
    <source>
    </source>
</evidence>
<evidence type="ECO:0007744" key="10">
    <source>
    </source>
</evidence>
<evidence type="ECO:0007829" key="11">
    <source>
        <dbReference type="PDB" id="1G16"/>
    </source>
</evidence>
<evidence type="ECO:0007829" key="12">
    <source>
        <dbReference type="PDB" id="2EQB"/>
    </source>
</evidence>
<evidence type="ECO:0007829" key="13">
    <source>
        <dbReference type="PDB" id="3CPH"/>
    </source>
</evidence>
<evidence type="ECO:0007829" key="14">
    <source>
        <dbReference type="PDB" id="4Z8Y"/>
    </source>
</evidence>
<organism>
    <name type="scientific">Saccharomyces cerevisiae (strain ATCC 204508 / S288c)</name>
    <name type="common">Baker's yeast</name>
    <dbReference type="NCBI Taxonomy" id="559292"/>
    <lineage>
        <taxon>Eukaryota</taxon>
        <taxon>Fungi</taxon>
        <taxon>Dikarya</taxon>
        <taxon>Ascomycota</taxon>
        <taxon>Saccharomycotina</taxon>
        <taxon>Saccharomycetes</taxon>
        <taxon>Saccharomycetales</taxon>
        <taxon>Saccharomycetaceae</taxon>
        <taxon>Saccharomyces</taxon>
    </lineage>
</organism>
<proteinExistence type="evidence at protein level"/>
<reference key="1">
    <citation type="journal article" date="1987" name="Cell">
        <title>A ras-like protein is required for a post-Golgi event in yeast secretion.</title>
        <authorList>
            <person name="Salminen A."/>
            <person name="Novick P.J."/>
        </authorList>
    </citation>
    <scope>NUCLEOTIDE SEQUENCE [GENOMIC DNA]</scope>
</reference>
<reference key="2">
    <citation type="journal article" date="1995" name="Nat. Genet.">
        <title>Analysis of the nucleotide sequence of chromosome VI from Saccharomyces cerevisiae.</title>
        <authorList>
            <person name="Murakami Y."/>
            <person name="Naitou M."/>
            <person name="Hagiwara H."/>
            <person name="Shibata T."/>
            <person name="Ozawa M."/>
            <person name="Sasanuma S."/>
            <person name="Sasanuma M."/>
            <person name="Tsuchiya Y."/>
            <person name="Soeda E."/>
            <person name="Yokoyama K."/>
            <person name="Yamazaki M."/>
            <person name="Tashiro H."/>
            <person name="Eki T."/>
        </authorList>
    </citation>
    <scope>NUCLEOTIDE SEQUENCE [LARGE SCALE GENOMIC DNA]</scope>
    <source>
        <strain>ATCC 204508 / S288c</strain>
    </source>
</reference>
<reference key="3">
    <citation type="journal article" date="2014" name="G3 (Bethesda)">
        <title>The reference genome sequence of Saccharomyces cerevisiae: Then and now.</title>
        <authorList>
            <person name="Engel S.R."/>
            <person name="Dietrich F.S."/>
            <person name="Fisk D.G."/>
            <person name="Binkley G."/>
            <person name="Balakrishnan R."/>
            <person name="Costanzo M.C."/>
            <person name="Dwight S.S."/>
            <person name="Hitz B.C."/>
            <person name="Karra K."/>
            <person name="Nash R.S."/>
            <person name="Weng S."/>
            <person name="Wong E.D."/>
            <person name="Lloyd P."/>
            <person name="Skrzypek M.S."/>
            <person name="Miyasato S.R."/>
            <person name="Simison M."/>
            <person name="Cherry J.M."/>
        </authorList>
    </citation>
    <scope>GENOME REANNOTATION</scope>
    <source>
        <strain>ATCC 204508 / S288c</strain>
    </source>
</reference>
<reference key="4">
    <citation type="journal article" date="1996" name="Yeast">
        <title>Sequencing of a 23 kb fragment from Saccharomyces cerevisiae chromosome VI.</title>
        <authorList>
            <person name="Naitou M."/>
            <person name="Ozawa M."/>
            <person name="Sasanuma S."/>
            <person name="Kobayashi M."/>
            <person name="Hagiwara H."/>
            <person name="Shibata T."/>
            <person name="Hanaoka F."/>
            <person name="Watanabe K."/>
            <person name="Ono A."/>
            <person name="Yamazaki M."/>
            <person name="Tashiro H."/>
            <person name="Eki T."/>
            <person name="Murakami Y."/>
        </authorList>
    </citation>
    <scope>NUCLEOTIDE SEQUENCE [GENOMIC DNA]</scope>
    <source>
        <strain>ATCC 204511 / S288c / AB972</strain>
    </source>
</reference>
<reference key="5">
    <citation type="journal article" date="2007" name="Genome Res.">
        <title>Approaching a complete repository of sequence-verified protein-encoding clones for Saccharomyces cerevisiae.</title>
        <authorList>
            <person name="Hu Y."/>
            <person name="Rolfs A."/>
            <person name="Bhullar B."/>
            <person name="Murthy T.V.S."/>
            <person name="Zhu C."/>
            <person name="Berger M.F."/>
            <person name="Camargo A.A."/>
            <person name="Kelley F."/>
            <person name="McCarron S."/>
            <person name="Jepson D."/>
            <person name="Richardson A."/>
            <person name="Raphael J."/>
            <person name="Moreira D."/>
            <person name="Taycher E."/>
            <person name="Zuo D."/>
            <person name="Mohr S."/>
            <person name="Kane M.F."/>
            <person name="Williamson J."/>
            <person name="Simpson A.J.G."/>
            <person name="Bulyk M.L."/>
            <person name="Harlow E."/>
            <person name="Marsischky G."/>
            <person name="Kolodner R.D."/>
            <person name="LaBaer J."/>
        </authorList>
    </citation>
    <scope>NUCLEOTIDE SEQUENCE [GENOMIC DNA]</scope>
    <source>
        <strain>ATCC 204508 / S288c</strain>
    </source>
</reference>
<reference key="6">
    <citation type="journal article" date="1997" name="J. Cell Biol.">
        <title>Sec2p mediates nucleotide exchange on Sec4p and is involved in polarized delivery of post-Golgi vesicles.</title>
        <authorList>
            <person name="Walch-Solimena C."/>
            <person name="Collins R.N."/>
            <person name="Novick P.J."/>
        </authorList>
    </citation>
    <scope>INTERACTION WITH SEC2</scope>
</reference>
<reference key="7">
    <citation type="journal article" date="2002" name="Biochem. Biophys. Res. Commun.">
        <title>Saccharomyces cerevisiae Pra1p/Yip3p interacts with Yip1p and Rab proteins.</title>
        <authorList>
            <person name="Calero M."/>
            <person name="Collins R.N."/>
        </authorList>
    </citation>
    <scope>INTERACTION WITH YIP3</scope>
</reference>
<reference key="8">
    <citation type="journal article" date="2002" name="FEBS Lett.">
        <title>Identification of the novel proteins Yip4p and Yip5p as Rab GTPase interacting factors.</title>
        <authorList>
            <person name="Calero M."/>
            <person name="Winand N.J."/>
            <person name="Collins R.N."/>
        </authorList>
    </citation>
    <scope>INTERACTION WITH YIF1; YIP4 AND YIP5</scope>
</reference>
<reference key="9">
    <citation type="journal article" date="2006" name="J. Cell Biol.">
        <title>The yeast lgl family member Sro7p is an effector of the secretory Rab GTPase Sec4p.</title>
        <authorList>
            <person name="Grosshans B.L."/>
            <person name="Andreeva A."/>
            <person name="Gangar A."/>
            <person name="Niessen S."/>
            <person name="Yates J.R. III"/>
            <person name="Brennwald P."/>
            <person name="Novick P."/>
        </authorList>
    </citation>
    <scope>FUNCTION</scope>
    <scope>INTERACTION WITH SRO7</scope>
</reference>
<reference key="10">
    <citation type="journal article" date="2007" name="J. Proteome Res.">
        <title>Large-scale phosphorylation analysis of alpha-factor-arrested Saccharomyces cerevisiae.</title>
        <authorList>
            <person name="Li X."/>
            <person name="Gerber S.A."/>
            <person name="Rudner A.D."/>
            <person name="Beausoleil S.A."/>
            <person name="Haas W."/>
            <person name="Villen J."/>
            <person name="Elias J.E."/>
            <person name="Gygi S.P."/>
        </authorList>
    </citation>
    <scope>PHOSPHORYLATION [LARGE SCALE ANALYSIS] AT SER-201 AND SER-204</scope>
    <scope>IDENTIFICATION BY MASS SPECTROMETRY [LARGE SCALE ANALYSIS]</scope>
    <source>
        <strain>ADR376</strain>
    </source>
</reference>
<reference key="11">
    <citation type="journal article" date="2008" name="Mol. Cell. Proteomics">
        <title>A multidimensional chromatography technology for in-depth phosphoproteome analysis.</title>
        <authorList>
            <person name="Albuquerque C.P."/>
            <person name="Smolka M.B."/>
            <person name="Payne S.H."/>
            <person name="Bafna V."/>
            <person name="Eng J."/>
            <person name="Zhou H."/>
        </authorList>
    </citation>
    <scope>PHOSPHORYLATION [LARGE SCALE ANALYSIS] AT SER-201</scope>
    <scope>IDENTIFICATION BY MASS SPECTROMETRY [LARGE SCALE ANALYSIS]</scope>
</reference>
<reference key="12">
    <citation type="journal article" date="2009" name="Science">
        <title>Global analysis of Cdk1 substrate phosphorylation sites provides insights into evolution.</title>
        <authorList>
            <person name="Holt L.J."/>
            <person name="Tuch B.B."/>
            <person name="Villen J."/>
            <person name="Johnson A.D."/>
            <person name="Gygi S.P."/>
            <person name="Morgan D.O."/>
        </authorList>
    </citation>
    <scope>PHOSPHORYLATION [LARGE SCALE ANALYSIS] AT SER-201 AND SER-204</scope>
    <scope>IDENTIFICATION BY MASS SPECTROMETRY [LARGE SCALE ANALYSIS]</scope>
</reference>
<reference key="13">
    <citation type="journal article" date="2000" name="J. Mol. Biol.">
        <title>Crystal structures of a Rab protein in its inactive and active conformations.</title>
        <authorList>
            <person name="Stroupe C."/>
            <person name="Brunger A.T."/>
        </authorList>
    </citation>
    <scope>X-RAY CRYSTALLOGRAPHY (1.8 ANGSTROMS) OF 18-187 IN COMPLEX WITH GDP AND GTP ANALOG</scope>
</reference>
<comment type="function">
    <text evidence="5">Involved in exocytosis. Maybe by regulating the binding and fusion of secretory vesicles with the cell surface. The GTP-bound form of SEC4 may interact with an effector, thereby stimulating its activity and leading to exocytotic fusion. SEC4 may be an upstream activator of the 19.5S SEC8/SEC15 particle. SEC4 probably interacts directly with SEC8; it could serve as the attachment site for the SEC8/SEC15 particle.</text>
</comment>
<comment type="subunit">
    <text evidence="2 3 4 5 6">Interacts with the guanyl-nucleotide exchange factor SEC2. Interacts with SRO7, YIF1, YIP3, YIP4 and YIP5.</text>
</comment>
<comment type="interaction">
    <interactant intactId="EBI-16858">
        <id>P07560</id>
    </interactant>
    <interactant intactId="EBI-7517">
        <id>P39958</id>
        <label>GDI1</label>
    </interactant>
    <organismsDiffer>false</organismsDiffer>
    <experiments>4</experiments>
</comment>
<comment type="interaction">
    <interactant intactId="EBI-16858">
        <id>P07560</id>
    </interactant>
    <interactant intactId="EBI-16842">
        <id>P17065</id>
        <label>SEC2</label>
    </interactant>
    <organismsDiffer>false</organismsDiffer>
    <experiments>4</experiments>
</comment>
<comment type="interaction">
    <interactant intactId="EBI-16858">
        <id>P07560</id>
    </interactant>
    <interactant intactId="EBI-28230">
        <id>P53845</id>
        <label>YIF1</label>
    </interactant>
    <organismsDiffer>false</organismsDiffer>
    <experiments>2</experiments>
</comment>
<comment type="interaction">
    <interactant intactId="EBI-16858">
        <id>P07560</id>
    </interactant>
    <interactant intactId="EBI-25301">
        <id>P53633</id>
        <label>YIP3</label>
    </interactant>
    <organismsDiffer>false</organismsDiffer>
    <experiments>2</experiments>
</comment>
<comment type="interaction">
    <interactant intactId="EBI-16858">
        <id>P07560</id>
    </interactant>
    <interactant intactId="EBI-24124">
        <id>P53093</id>
        <label>YIP4</label>
    </interactant>
    <organismsDiffer>false</organismsDiffer>
    <experiments>2</experiments>
</comment>
<comment type="interaction">
    <interactant intactId="EBI-16858">
        <id>P07560</id>
    </interactant>
    <interactant intactId="EBI-29496">
        <id>P01123</id>
        <label>YPT1</label>
    </interactant>
    <organismsDiffer>false</organismsDiffer>
    <experiments>2</experiments>
</comment>
<comment type="subcellular location">
    <subcellularLocation>
        <location>Cytoplasmic vesicle</location>
        <location>Secretory vesicle membrane</location>
        <topology>Lipid-anchor</topology>
        <orientation>Cytoplasmic side</orientation>
    </subcellularLocation>
    <subcellularLocation>
        <location>Cell membrane</location>
        <topology>Lipid-anchor</topology>
        <orientation>Cytoplasmic side</orientation>
    </subcellularLocation>
    <subcellularLocation>
        <location>Cytoplasm</location>
    </subcellularLocation>
    <text>A small fraction is soluble.</text>
</comment>
<comment type="similarity">
    <text evidence="7">Belongs to the small GTPase superfamily. Rab family.</text>
</comment>